<feature type="initiator methionine" description="Removed" evidence="4">
    <location>
        <position position="1"/>
    </location>
</feature>
<feature type="chain" id="PRO_0000179962" description="6-phosphofructo-2-kinase/fructose-2,6-bisphosphatase 1">
    <location>
        <begin position="2"/>
        <end position="471"/>
    </location>
</feature>
<feature type="region of interest" description="6-phosphofructo-2-kinase">
    <location>
        <begin position="2"/>
        <end position="250"/>
    </location>
</feature>
<feature type="region of interest" description="Fructose-2,6-bisphosphatase">
    <location>
        <begin position="251"/>
        <end position="471"/>
    </location>
</feature>
<feature type="active site" evidence="3">
    <location>
        <position position="131"/>
    </location>
</feature>
<feature type="active site" evidence="3">
    <location>
        <position position="161"/>
    </location>
</feature>
<feature type="active site" description="Tele-phosphohistidine intermediate" evidence="7">
    <location>
        <position position="259"/>
    </location>
</feature>
<feature type="active site" description="Proton donor/acceptor" evidence="7">
    <location>
        <position position="328"/>
    </location>
</feature>
<feature type="binding site" evidence="2">
    <location>
        <begin position="49"/>
        <end position="57"/>
    </location>
    <ligand>
        <name>ATP</name>
        <dbReference type="ChEBI" id="CHEBI:30616"/>
    </ligand>
</feature>
<feature type="binding site" evidence="2">
    <location>
        <position position="82"/>
    </location>
    <ligand>
        <name>beta-D-fructose 6-phosphate</name>
        <dbReference type="ChEBI" id="CHEBI:57634"/>
    </ligand>
</feature>
<feature type="binding site" evidence="2">
    <location>
        <position position="105"/>
    </location>
    <ligand>
        <name>beta-D-fructose 6-phosphate</name>
        <dbReference type="ChEBI" id="CHEBI:57634"/>
    </ligand>
</feature>
<feature type="binding site" evidence="2">
    <location>
        <position position="133"/>
    </location>
    <ligand>
        <name>beta-D-fructose 6-phosphate</name>
        <dbReference type="ChEBI" id="CHEBI:57634"/>
    </ligand>
</feature>
<feature type="binding site" evidence="2">
    <location>
        <position position="139"/>
    </location>
    <ligand>
        <name>beta-D-fructose 6-phosphate</name>
        <dbReference type="ChEBI" id="CHEBI:57634"/>
    </ligand>
</feature>
<feature type="binding site" evidence="2">
    <location>
        <begin position="170"/>
        <end position="175"/>
    </location>
    <ligand>
        <name>ATP</name>
        <dbReference type="ChEBI" id="CHEBI:30616"/>
    </ligand>
</feature>
<feature type="binding site" evidence="2">
    <location>
        <position position="175"/>
    </location>
    <ligand>
        <name>beta-D-fructose 6-phosphate</name>
        <dbReference type="ChEBI" id="CHEBI:57634"/>
    </ligand>
</feature>
<feature type="binding site" evidence="2">
    <location>
        <position position="196"/>
    </location>
    <ligand>
        <name>beta-D-fructose 6-phosphate</name>
        <dbReference type="ChEBI" id="CHEBI:57634"/>
    </ligand>
</feature>
<feature type="binding site" evidence="2">
    <location>
        <position position="200"/>
    </location>
    <ligand>
        <name>beta-D-fructose 6-phosphate</name>
        <dbReference type="ChEBI" id="CHEBI:57634"/>
    </ligand>
</feature>
<feature type="binding site" evidence="2">
    <location>
        <position position="258"/>
    </location>
    <ligand>
        <name>beta-D-fructose 2,6-bisphosphate</name>
        <dbReference type="ChEBI" id="CHEBI:58579"/>
    </ligand>
</feature>
<feature type="binding site" evidence="2">
    <location>
        <position position="265"/>
    </location>
    <ligand>
        <name>beta-D-fructose 2,6-bisphosphate</name>
        <dbReference type="ChEBI" id="CHEBI:58579"/>
    </ligand>
</feature>
<feature type="binding site" evidence="7">
    <location>
        <position position="271"/>
    </location>
    <ligand>
        <name>beta-D-fructose 2,6-bisphosphate</name>
        <dbReference type="ChEBI" id="CHEBI:58579"/>
    </ligand>
</feature>
<feature type="binding site" evidence="2">
    <location>
        <position position="308"/>
    </location>
    <ligand>
        <name>beta-D-fructose 2,6-bisphosphate</name>
        <dbReference type="ChEBI" id="CHEBI:58579"/>
    </ligand>
</feature>
<feature type="binding site" evidence="7">
    <location>
        <position position="339"/>
    </location>
    <ligand>
        <name>beta-D-fructose 2,6-bisphosphate</name>
        <dbReference type="ChEBI" id="CHEBI:58579"/>
    </ligand>
</feature>
<feature type="binding site" evidence="8">
    <location>
        <begin position="350"/>
        <end position="353"/>
    </location>
    <ligand>
        <name>ATP</name>
        <dbReference type="ChEBI" id="CHEBI:30616"/>
    </ligand>
</feature>
<feature type="binding site" evidence="7">
    <location>
        <position position="353"/>
    </location>
    <ligand>
        <name>beta-D-fructose 2,6-bisphosphate</name>
        <dbReference type="ChEBI" id="CHEBI:58579"/>
    </ligand>
</feature>
<feature type="binding site" evidence="7">
    <location>
        <position position="357"/>
    </location>
    <ligand>
        <name>beta-D-fructose 2,6-bisphosphate</name>
        <dbReference type="ChEBI" id="CHEBI:58579"/>
    </ligand>
</feature>
<feature type="binding site" evidence="7">
    <location>
        <position position="368"/>
    </location>
    <ligand>
        <name>beta-D-fructose 2,6-bisphosphate</name>
        <dbReference type="ChEBI" id="CHEBI:58579"/>
    </ligand>
</feature>
<feature type="binding site" evidence="8">
    <location>
        <begin position="394"/>
        <end position="398"/>
    </location>
    <ligand>
        <name>ATP</name>
        <dbReference type="ChEBI" id="CHEBI:30616"/>
    </ligand>
</feature>
<feature type="binding site" evidence="7">
    <location>
        <position position="394"/>
    </location>
    <ligand>
        <name>beta-D-fructose 2,6-bisphosphate</name>
        <dbReference type="ChEBI" id="CHEBI:58579"/>
    </ligand>
</feature>
<feature type="binding site" evidence="7">
    <location>
        <position position="398"/>
    </location>
    <ligand>
        <name>beta-D-fructose 2,6-bisphosphate</name>
        <dbReference type="ChEBI" id="CHEBI:58579"/>
    </ligand>
</feature>
<feature type="binding site" evidence="2">
    <location>
        <position position="430"/>
    </location>
    <ligand>
        <name>ATP</name>
        <dbReference type="ChEBI" id="CHEBI:30616"/>
    </ligand>
</feature>
<feature type="site" description="Transition state stabilizer" evidence="1">
    <location>
        <position position="393"/>
    </location>
</feature>
<feature type="modified residue" description="N-acetylserine" evidence="4">
    <location>
        <position position="2"/>
    </location>
</feature>
<feature type="modified residue" description="Phosphoserine; by PKA" evidence="6">
    <location>
        <position position="33"/>
    </location>
</feature>
<feature type="modified residue" description="Phosphoserine" evidence="13">
    <location>
        <position position="141"/>
    </location>
</feature>
<feature type="splice variant" id="VSP_004674" description="In isoform 2." evidence="9">
    <original>MSREMGELTQTRLQKIWIPHSSSSSVLQRRRGS</original>
    <variation>MEEKASKRTA</variation>
    <location>
        <begin position="1"/>
        <end position="33"/>
    </location>
</feature>
<feature type="sequence conflict" description="In Ref. 3, 4 and 5." evidence="10" ref="3 4 5">
    <original>T</original>
    <variation>Y</variation>
    <location>
        <position position="135"/>
    </location>
</feature>
<feature type="sequence conflict" description="In Ref. 3." evidence="10" ref="3">
    <original>E</original>
    <variation>F</variation>
    <location>
        <position position="138"/>
    </location>
</feature>
<feature type="sequence conflict" description="In Ref. 7; AA sequence." evidence="10" ref="7">
    <location>
        <position position="257"/>
    </location>
</feature>
<feature type="strand" evidence="15">
    <location>
        <begin position="253"/>
        <end position="258"/>
    </location>
</feature>
<feature type="helix" evidence="15">
    <location>
        <begin position="263"/>
        <end position="267"/>
    </location>
</feature>
<feature type="helix" evidence="15">
    <location>
        <begin position="278"/>
        <end position="292"/>
    </location>
</feature>
<feature type="strand" evidence="15">
    <location>
        <begin position="300"/>
        <end position="306"/>
    </location>
</feature>
<feature type="helix" evidence="15">
    <location>
        <begin position="307"/>
        <end position="314"/>
    </location>
</feature>
<feature type="turn" evidence="14">
    <location>
        <begin position="315"/>
        <end position="317"/>
    </location>
</feature>
<feature type="strand" evidence="15">
    <location>
        <begin position="321"/>
        <end position="323"/>
    </location>
</feature>
<feature type="helix" evidence="15">
    <location>
        <begin position="324"/>
        <end position="326"/>
    </location>
</feature>
<feature type="helix" evidence="15">
    <location>
        <begin position="332"/>
        <end position="334"/>
    </location>
</feature>
<feature type="helix" evidence="15">
    <location>
        <begin position="339"/>
        <end position="345"/>
    </location>
</feature>
<feature type="helix" evidence="15">
    <location>
        <begin position="347"/>
        <end position="355"/>
    </location>
</feature>
<feature type="turn" evidence="15">
    <location>
        <begin position="357"/>
        <end position="359"/>
    </location>
</feature>
<feature type="helix" evidence="15">
    <location>
        <begin position="368"/>
        <end position="374"/>
    </location>
</feature>
<feature type="helix" evidence="15">
    <location>
        <begin position="376"/>
        <end position="383"/>
    </location>
</feature>
<feature type="strand" evidence="15">
    <location>
        <begin position="386"/>
        <end position="392"/>
    </location>
</feature>
<feature type="helix" evidence="15">
    <location>
        <begin position="394"/>
        <end position="404"/>
    </location>
</feature>
<feature type="turn" evidence="15">
    <location>
        <begin position="409"/>
        <end position="411"/>
    </location>
</feature>
<feature type="helix" evidence="15">
    <location>
        <begin position="412"/>
        <end position="414"/>
    </location>
</feature>
<feature type="strand" evidence="15">
    <location>
        <begin position="421"/>
        <end position="428"/>
    </location>
</feature>
<feature type="strand" evidence="15">
    <location>
        <begin position="431"/>
        <end position="438"/>
    </location>
</feature>
<sequence length="471" mass="54763">MSREMGELTQTRLQKIWIPHSSSSSVLQRRRGSSIPQFTNSPTMVIMVGLPARGKTYISTKLTRYLNWIGTPTKVFNLGQYRREAVSYRNYEFFRPDNTEAQLIRKQCALAALKDVHKYLSREEGHVAVFDATNTTRERRSLILQFAKEHGYKVFFIESICNDPEIIAENIKQVKLGSPDYIDCDQEKVLEDFLKRIECYEINYQPLDEELDSHLSYIKIFDVGTRYMVNRVQDHVQSRTAYYLMNIHVTPRSIYLCRHGESELNLRGRIGGDSGLSARGKQYAYALANFIRSQGISSLKVWTSHMKRTIQTAEALGVPYEQWKALNEIDAGVCEEMTYEEIQEHYPEEFALRDQDKYRYRYPKGESYEDLVQRLEPVIMELERQENVLVICHQAVMRCLLAYFLDKSSDELPYLKCPLHTVLKLTPVAYGCRVESIYLNVEAVNTHRDKPENVDITREAEEALDTVPAHY</sequence>
<evidence type="ECO:0000250" key="1">
    <source>
        <dbReference type="UniProtKB" id="P00950"/>
    </source>
</evidence>
<evidence type="ECO:0000250" key="2">
    <source>
        <dbReference type="UniProtKB" id="Q16875"/>
    </source>
</evidence>
<evidence type="ECO:0000255" key="3"/>
<evidence type="ECO:0000269" key="4">
    <source>
    </source>
</evidence>
<evidence type="ECO:0000269" key="5">
    <source>
    </source>
</evidence>
<evidence type="ECO:0000269" key="6">
    <source>
    </source>
</evidence>
<evidence type="ECO:0000269" key="7">
    <source>
    </source>
</evidence>
<evidence type="ECO:0000269" key="8">
    <source ref="15"/>
</evidence>
<evidence type="ECO:0000303" key="9">
    <source>
    </source>
</evidence>
<evidence type="ECO:0000305" key="10"/>
<evidence type="ECO:0000305" key="11">
    <source>
    </source>
</evidence>
<evidence type="ECO:0000312" key="12">
    <source>
        <dbReference type="RGD" id="3307"/>
    </source>
</evidence>
<evidence type="ECO:0007744" key="13">
    <source>
    </source>
</evidence>
<evidence type="ECO:0007829" key="14">
    <source>
        <dbReference type="PDB" id="1C80"/>
    </source>
</evidence>
<evidence type="ECO:0007829" key="15">
    <source>
        <dbReference type="PDB" id="1FBT"/>
    </source>
</evidence>
<protein>
    <recommendedName>
        <fullName evidence="10">6-phosphofructo-2-kinase/fructose-2,6-bisphosphatase 1</fullName>
        <shortName>6PF-2-K/Fru-2,6-P2ase 1</shortName>
        <shortName>PFK/FBPase 1</shortName>
    </recommendedName>
    <alternativeName>
        <fullName>6PF-2-K/Fru-2,6-P2ase liver isozyme</fullName>
    </alternativeName>
    <domain>
        <recommendedName>
            <fullName>6-phosphofructo-2-kinase</fullName>
            <ecNumber evidence="5">2.7.1.105</ecNumber>
        </recommendedName>
    </domain>
    <domain>
        <recommendedName>
            <fullName>Fructose-2,6-bisphosphatase</fullName>
            <ecNumber evidence="5">3.1.3.46</ecNumber>
        </recommendedName>
    </domain>
</protein>
<keyword id="KW-0002">3D-structure</keyword>
<keyword id="KW-0007">Acetylation</keyword>
<keyword id="KW-0025">Alternative splicing</keyword>
<keyword id="KW-0067">ATP-binding</keyword>
<keyword id="KW-0903">Direct protein sequencing</keyword>
<keyword id="KW-0378">Hydrolase</keyword>
<keyword id="KW-0418">Kinase</keyword>
<keyword id="KW-0511">Multifunctional enzyme</keyword>
<keyword id="KW-0547">Nucleotide-binding</keyword>
<keyword id="KW-0597">Phosphoprotein</keyword>
<keyword id="KW-1185">Reference proteome</keyword>
<keyword id="KW-0808">Transferase</keyword>
<comment type="function">
    <text evidence="5">Synthesis and degradation of fructose 2,6-bisphosphate.</text>
</comment>
<comment type="catalytic activity">
    <reaction evidence="5">
        <text>beta-D-fructose 2,6-bisphosphate + H2O = beta-D-fructose 6-phosphate + phosphate</text>
        <dbReference type="Rhea" id="RHEA:17289"/>
        <dbReference type="ChEBI" id="CHEBI:15377"/>
        <dbReference type="ChEBI" id="CHEBI:43474"/>
        <dbReference type="ChEBI" id="CHEBI:57634"/>
        <dbReference type="ChEBI" id="CHEBI:58579"/>
        <dbReference type="EC" id="3.1.3.46"/>
    </reaction>
    <physiologicalReaction direction="left-to-right" evidence="11">
        <dbReference type="Rhea" id="RHEA:17290"/>
    </physiologicalReaction>
</comment>
<comment type="catalytic activity">
    <reaction evidence="5">
        <text>beta-D-fructose 6-phosphate + ATP = beta-D-fructose 2,6-bisphosphate + ADP + H(+)</text>
        <dbReference type="Rhea" id="RHEA:15653"/>
        <dbReference type="ChEBI" id="CHEBI:15378"/>
        <dbReference type="ChEBI" id="CHEBI:30616"/>
        <dbReference type="ChEBI" id="CHEBI:57634"/>
        <dbReference type="ChEBI" id="CHEBI:58579"/>
        <dbReference type="ChEBI" id="CHEBI:456216"/>
        <dbReference type="EC" id="2.7.1.105"/>
    </reaction>
    <physiologicalReaction direction="left-to-right" evidence="11">
        <dbReference type="Rhea" id="RHEA:15654"/>
    </physiologicalReaction>
</comment>
<comment type="activity regulation">
    <text evidence="6">Phosphorylation at Ser-33 inhibits the kinase and activates the bisphosphatase.</text>
</comment>
<comment type="subunit">
    <text evidence="7">Homodimer.</text>
</comment>
<comment type="interaction">
    <interactant intactId="EBI-709873">
        <id>P07953</id>
    </interactant>
    <interactant intactId="EBI-709873">
        <id>P07953</id>
        <label>Pfkfb1</label>
    </interactant>
    <organismsDiffer>false</organismsDiffer>
    <experiments>5</experiments>
</comment>
<comment type="alternative products">
    <event type="alternative splicing"/>
    <isoform>
        <id>P07953-1</id>
        <name>1</name>
        <sequence type="displayed"/>
    </isoform>
    <isoform>
        <id>P07953-2</id>
        <name>2</name>
        <sequence type="described" ref="VSP_004674"/>
    </isoform>
</comment>
<comment type="tissue specificity">
    <text>Liver.</text>
</comment>
<comment type="similarity">
    <text evidence="10">In the C-terminal section; belongs to the phosphoglycerate mutase family.</text>
</comment>
<accession>P07953</accession>
<accession>P16119</accession>
<gene>
    <name evidence="12" type="primary">Pfkfb1</name>
</gene>
<dbReference type="EC" id="2.7.1.105" evidence="5"/>
<dbReference type="EC" id="3.1.3.46" evidence="5"/>
<dbReference type="EMBL" id="Y00702">
    <property type="protein sequence ID" value="CAA68694.1"/>
    <property type="molecule type" value="mRNA"/>
</dbReference>
<dbReference type="EMBL" id="X15579">
    <property type="protein sequence ID" value="CAA33606.1"/>
    <property type="molecule type" value="mRNA"/>
</dbReference>
<dbReference type="EMBL" id="X15580">
    <property type="protein sequence ID" value="CAA33607.1"/>
    <property type="molecule type" value="mRNA"/>
</dbReference>
<dbReference type="EMBL" id="M26215">
    <property type="protein sequence ID" value="AAA02888.2"/>
    <property type="molecule type" value="Genomic_DNA"/>
</dbReference>
<dbReference type="EMBL" id="M26216">
    <property type="protein sequence ID" value="AAA02889.1"/>
    <property type="molecule type" value="Genomic_DNA"/>
</dbReference>
<dbReference type="EMBL" id="J04197">
    <property type="protein sequence ID" value="AAA79008.1"/>
    <property type="molecule type" value="mRNA"/>
</dbReference>
<dbReference type="EMBL" id="M27886">
    <property type="protein sequence ID" value="AAA58780.1"/>
    <property type="molecule type" value="Genomic_DNA"/>
</dbReference>
<dbReference type="PIR" id="S11761">
    <property type="entry name" value="KIRTFB"/>
</dbReference>
<dbReference type="RefSeq" id="NP_036753.4">
    <molecule id="P07953-1"/>
    <property type="nucleotide sequence ID" value="NM_012621.4"/>
</dbReference>
<dbReference type="PDB" id="1C7Z">
    <property type="method" value="X-ray"/>
    <property type="resolution" value="2.60 A"/>
    <property type="chains" value="A/B=252-441"/>
</dbReference>
<dbReference type="PDB" id="1C80">
    <property type="method" value="X-ray"/>
    <property type="resolution" value="2.20 A"/>
    <property type="chains" value="A/B=252-441"/>
</dbReference>
<dbReference type="PDB" id="1C81">
    <property type="method" value="X-ray"/>
    <property type="resolution" value="2.50 A"/>
    <property type="chains" value="A=252-441"/>
</dbReference>
<dbReference type="PDB" id="1FBT">
    <property type="method" value="X-ray"/>
    <property type="resolution" value="2.00 A"/>
    <property type="chains" value="A/B=252-441"/>
</dbReference>
<dbReference type="PDB" id="1TIP">
    <property type="method" value="X-ray"/>
    <property type="resolution" value="2.20 A"/>
    <property type="chains" value="A/B=252-441"/>
</dbReference>
<dbReference type="PDBsum" id="1C7Z"/>
<dbReference type="PDBsum" id="1C80"/>
<dbReference type="PDBsum" id="1C81"/>
<dbReference type="PDBsum" id="1FBT"/>
<dbReference type="PDBsum" id="1TIP"/>
<dbReference type="BMRB" id="P07953"/>
<dbReference type="SMR" id="P07953"/>
<dbReference type="ComplexPortal" id="CPX-2040">
    <property type="entry name" value="6-phosphofructo-2-kinase/fructose-2,6-biphosphatase 1 complex"/>
</dbReference>
<dbReference type="FunCoup" id="P07953">
    <property type="interactions" value="519"/>
</dbReference>
<dbReference type="IntAct" id="P07953">
    <property type="interactions" value="2"/>
</dbReference>
<dbReference type="MINT" id="P07953"/>
<dbReference type="STRING" id="10116.ENSRNOP00000035212"/>
<dbReference type="GlyGen" id="P07953">
    <property type="glycosylation" value="1 site"/>
</dbReference>
<dbReference type="iPTMnet" id="P07953"/>
<dbReference type="PhosphoSitePlus" id="P07953"/>
<dbReference type="jPOST" id="P07953"/>
<dbReference type="PaxDb" id="10116-ENSRNOP00000035212"/>
<dbReference type="Ensembl" id="ENSRNOT00000033656.3">
    <molecule id="P07953-1"/>
    <property type="protein sequence ID" value="ENSRNOP00000035212.1"/>
    <property type="gene ID" value="ENSRNOG00000000165.9"/>
</dbReference>
<dbReference type="GeneID" id="24638"/>
<dbReference type="KEGG" id="rno:24638"/>
<dbReference type="AGR" id="RGD:3307"/>
<dbReference type="CTD" id="5207"/>
<dbReference type="RGD" id="3307">
    <property type="gene designation" value="Pfkfb1"/>
</dbReference>
<dbReference type="eggNOG" id="KOG0234">
    <property type="taxonomic scope" value="Eukaryota"/>
</dbReference>
<dbReference type="GeneTree" id="ENSGT00950000182835"/>
<dbReference type="HOGENOM" id="CLU_006383_1_1_1"/>
<dbReference type="InParanoid" id="P07953"/>
<dbReference type="OMA" id="RCMYAYF"/>
<dbReference type="OrthoDB" id="267323at2759"/>
<dbReference type="PhylomeDB" id="P07953"/>
<dbReference type="TreeFam" id="TF313541"/>
<dbReference type="BRENDA" id="2.7.1.105">
    <property type="organism ID" value="5301"/>
</dbReference>
<dbReference type="BRENDA" id="3.1.3.46">
    <property type="organism ID" value="5301"/>
</dbReference>
<dbReference type="Reactome" id="R-RNO-9634600">
    <property type="pathway name" value="Regulation of glycolysis by fructose 2,6-bisphosphate metabolism"/>
</dbReference>
<dbReference type="SABIO-RK" id="P07953"/>
<dbReference type="EvolutionaryTrace" id="P07953"/>
<dbReference type="PRO" id="PR:P07953"/>
<dbReference type="Proteomes" id="UP000002494">
    <property type="component" value="Chromosome X"/>
</dbReference>
<dbReference type="Bgee" id="ENSRNOG00000000165">
    <property type="expression patterns" value="Expressed in skeletal muscle tissue and 16 other cell types or tissues"/>
</dbReference>
<dbReference type="ExpressionAtlas" id="P07953">
    <property type="expression patterns" value="baseline and differential"/>
</dbReference>
<dbReference type="GO" id="GO:0043540">
    <property type="term" value="C:6-phosphofructo-2-kinase/fructose-2,6-biphosphatase complex"/>
    <property type="evidence" value="ECO:0000314"/>
    <property type="project" value="RGD"/>
</dbReference>
<dbReference type="GO" id="GO:0005829">
    <property type="term" value="C:cytosol"/>
    <property type="evidence" value="ECO:0000318"/>
    <property type="project" value="GO_Central"/>
</dbReference>
<dbReference type="GO" id="GO:0003873">
    <property type="term" value="F:6-phosphofructo-2-kinase activity"/>
    <property type="evidence" value="ECO:0000314"/>
    <property type="project" value="RGD"/>
</dbReference>
<dbReference type="GO" id="GO:0005524">
    <property type="term" value="F:ATP binding"/>
    <property type="evidence" value="ECO:0000314"/>
    <property type="project" value="RGD"/>
</dbReference>
<dbReference type="GO" id="GO:0004331">
    <property type="term" value="F:fructose-2,6-bisphosphate 2-phosphatase activity"/>
    <property type="evidence" value="ECO:0000314"/>
    <property type="project" value="RGD"/>
</dbReference>
<dbReference type="GO" id="GO:0070095">
    <property type="term" value="F:fructose-6-phosphate binding"/>
    <property type="evidence" value="ECO:0000314"/>
    <property type="project" value="RGD"/>
</dbReference>
<dbReference type="GO" id="GO:0042802">
    <property type="term" value="F:identical protein binding"/>
    <property type="evidence" value="ECO:0000314"/>
    <property type="project" value="RGD"/>
</dbReference>
<dbReference type="GO" id="GO:0019900">
    <property type="term" value="F:kinase binding"/>
    <property type="evidence" value="ECO:0000353"/>
    <property type="project" value="RGD"/>
</dbReference>
<dbReference type="GO" id="GO:0031100">
    <property type="term" value="P:animal organ regeneration"/>
    <property type="evidence" value="ECO:0000270"/>
    <property type="project" value="RGD"/>
</dbReference>
<dbReference type="GO" id="GO:0046835">
    <property type="term" value="P:carbohydrate phosphorylation"/>
    <property type="evidence" value="ECO:0000314"/>
    <property type="project" value="RGD"/>
</dbReference>
<dbReference type="GO" id="GO:0006003">
    <property type="term" value="P:fructose 2,6-bisphosphate metabolic process"/>
    <property type="evidence" value="ECO:0000250"/>
    <property type="project" value="UniProtKB"/>
</dbReference>
<dbReference type="GO" id="GO:0006000">
    <property type="term" value="P:fructose metabolic process"/>
    <property type="evidence" value="ECO:0007669"/>
    <property type="project" value="InterPro"/>
</dbReference>
<dbReference type="GO" id="GO:1904539">
    <property type="term" value="P:negative regulation of glycolytic process through fructose-6-phosphate"/>
    <property type="evidence" value="ECO:0000266"/>
    <property type="project" value="RGD"/>
</dbReference>
<dbReference type="GO" id="GO:1904540">
    <property type="term" value="P:positive regulation of glycolytic process through fructose-6-phosphate"/>
    <property type="evidence" value="ECO:0000315"/>
    <property type="project" value="FlyBase"/>
</dbReference>
<dbReference type="GO" id="GO:0051591">
    <property type="term" value="P:response to cAMP"/>
    <property type="evidence" value="ECO:0000270"/>
    <property type="project" value="RGD"/>
</dbReference>
<dbReference type="GO" id="GO:0033762">
    <property type="term" value="P:response to glucagon"/>
    <property type="evidence" value="ECO:0000270"/>
    <property type="project" value="RGD"/>
</dbReference>
<dbReference type="GO" id="GO:0051384">
    <property type="term" value="P:response to glucocorticoid"/>
    <property type="evidence" value="ECO:0000270"/>
    <property type="project" value="RGD"/>
</dbReference>
<dbReference type="GO" id="GO:0032868">
    <property type="term" value="P:response to insulin"/>
    <property type="evidence" value="ECO:0000270"/>
    <property type="project" value="RGD"/>
</dbReference>
<dbReference type="GO" id="GO:0042594">
    <property type="term" value="P:response to starvation"/>
    <property type="evidence" value="ECO:0000270"/>
    <property type="project" value="RGD"/>
</dbReference>
<dbReference type="CDD" id="cd07067">
    <property type="entry name" value="HP_PGM_like"/>
    <property type="match status" value="1"/>
</dbReference>
<dbReference type="FunFam" id="3.40.50.1240:FF:000001">
    <property type="entry name" value="6-phosphofructo-2-kinase/fructose-2, 6-bisphosphatase 3 isoform 2"/>
    <property type="match status" value="1"/>
</dbReference>
<dbReference type="FunFam" id="3.40.50.300:FF:000047">
    <property type="entry name" value="6-phosphofructo-2-kinase/fructose-2, 6-bisphosphatase 3 isoform 2"/>
    <property type="match status" value="1"/>
</dbReference>
<dbReference type="Gene3D" id="3.40.50.300">
    <property type="entry name" value="P-loop containing nucleotide triphosphate hydrolases"/>
    <property type="match status" value="1"/>
</dbReference>
<dbReference type="Gene3D" id="3.40.50.1240">
    <property type="entry name" value="Phosphoglycerate mutase-like"/>
    <property type="match status" value="1"/>
</dbReference>
<dbReference type="InterPro" id="IPR003094">
    <property type="entry name" value="6Pfruct_kin"/>
</dbReference>
<dbReference type="InterPro" id="IPR013079">
    <property type="entry name" value="6Phosfructo_kin"/>
</dbReference>
<dbReference type="InterPro" id="IPR013078">
    <property type="entry name" value="His_Pase_superF_clade-1"/>
</dbReference>
<dbReference type="InterPro" id="IPR029033">
    <property type="entry name" value="His_PPase_superfam"/>
</dbReference>
<dbReference type="InterPro" id="IPR027417">
    <property type="entry name" value="P-loop_NTPase"/>
</dbReference>
<dbReference type="InterPro" id="IPR001345">
    <property type="entry name" value="PG/BPGM_mutase_AS"/>
</dbReference>
<dbReference type="PANTHER" id="PTHR10606">
    <property type="entry name" value="6-PHOSPHOFRUCTO-2-KINASE/FRUCTOSE-2,6-BISPHOSPHATASE"/>
    <property type="match status" value="1"/>
</dbReference>
<dbReference type="PANTHER" id="PTHR10606:SF15">
    <property type="entry name" value="6-PHOSPHOFRUCTO-2-KINASE_FRUCTOSE-2,6-BISPHOSPHATASE 1"/>
    <property type="match status" value="1"/>
</dbReference>
<dbReference type="Pfam" id="PF01591">
    <property type="entry name" value="6PF2K"/>
    <property type="match status" value="1"/>
</dbReference>
<dbReference type="Pfam" id="PF00300">
    <property type="entry name" value="His_Phos_1"/>
    <property type="match status" value="1"/>
</dbReference>
<dbReference type="PIRSF" id="PIRSF000709">
    <property type="entry name" value="6PFK_2-Ptase"/>
    <property type="match status" value="1"/>
</dbReference>
<dbReference type="PRINTS" id="PR00991">
    <property type="entry name" value="6PFRUCTKNASE"/>
</dbReference>
<dbReference type="SMART" id="SM00855">
    <property type="entry name" value="PGAM"/>
    <property type="match status" value="1"/>
</dbReference>
<dbReference type="SUPFAM" id="SSF52540">
    <property type="entry name" value="P-loop containing nucleoside triphosphate hydrolases"/>
    <property type="match status" value="1"/>
</dbReference>
<dbReference type="SUPFAM" id="SSF53254">
    <property type="entry name" value="Phosphoglycerate mutase-like"/>
    <property type="match status" value="1"/>
</dbReference>
<dbReference type="PROSITE" id="PS00175">
    <property type="entry name" value="PG_MUTASE"/>
    <property type="match status" value="1"/>
</dbReference>
<organism>
    <name type="scientific">Rattus norvegicus</name>
    <name type="common">Rat</name>
    <dbReference type="NCBI Taxonomy" id="10116"/>
    <lineage>
        <taxon>Eukaryota</taxon>
        <taxon>Metazoa</taxon>
        <taxon>Chordata</taxon>
        <taxon>Craniata</taxon>
        <taxon>Vertebrata</taxon>
        <taxon>Euteleostomi</taxon>
        <taxon>Mammalia</taxon>
        <taxon>Eutheria</taxon>
        <taxon>Euarchontoglires</taxon>
        <taxon>Glires</taxon>
        <taxon>Rodentia</taxon>
        <taxon>Myomorpha</taxon>
        <taxon>Muroidea</taxon>
        <taxon>Muridae</taxon>
        <taxon>Murinae</taxon>
        <taxon>Rattus</taxon>
    </lineage>
</organism>
<proteinExistence type="evidence at protein level"/>
<reference key="1">
    <citation type="journal article" date="1987" name="FEBS Lett.">
        <title>Complete nucleotide sequence coding for rat liver 6-phosphofructo-2-kinase/fructose-2,6-bisphosphatase derived from a cDNA clone.</title>
        <authorList>
            <person name="Darville M.I."/>
            <person name="Crepin K.M."/>
            <person name="Vandekerckhove J."/>
            <person name="van Damme J."/>
            <person name="Octave J.-N."/>
            <person name="Rider M.H."/>
            <person name="Marchand M.J."/>
            <person name="Hue L."/>
            <person name="Rousseau G.G."/>
        </authorList>
    </citation>
    <scope>NUCLEOTIDE SEQUENCE (ISOFORM 1)</scope>
    <scope>PROTEIN SEQUENCE OF 16-29; 65-74; 90-105; 123-137; 189-195; 240-252; 259-266 AND 309-324 (ISOFORM 1)</scope>
    <source>
        <strain>Wistar</strain>
        <tissue>Liver</tissue>
    </source>
</reference>
<reference key="2">
    <citation type="journal article" date="1987" name="Biochem. Biophys. Res. Commun.">
        <title>Isolation of a cDNA clone for rat liver 6-phosphofructo 2-kinase/fructose 2,6-bisphosphatase.</title>
        <authorList>
            <person name="Colosa A.D."/>
            <person name="Lively M.O."/>
            <person name="El-Maghrabi M.R."/>
            <person name="Pilkis S.J."/>
        </authorList>
    </citation>
    <scope>NUCLEOTIDE SEQUENCE (ISOFORM 1)</scope>
    <source>
        <strain>Sprague-Dawley</strain>
    </source>
</reference>
<reference key="3">
    <citation type="journal article" date="1989" name="Eur. J. Biochem.">
        <title>Characterization of distinct mRNAs coding for putative isozymes of 6-phosphofructo-2-kinase/fructose-2,6-bisphosphatase.</title>
        <authorList>
            <person name="Crepin K.M."/>
            <person name="Darville M.I."/>
            <person name="Hue L."/>
            <person name="Rousseau G.G."/>
        </authorList>
    </citation>
    <scope>NUCLEOTIDE SEQUENCE [MRNA] (ISOFORMS 1 AND 2)</scope>
    <source>
        <strain>Wistar</strain>
        <tissue>Liver</tissue>
    </source>
</reference>
<reference key="4">
    <citation type="journal article" date="1988" name="J. Biol. Chem.">
        <title>Induction of rat liver 6-phosphofructo-2-kinase/fructose-2,6-bisphosphatase mRNA by refeeding and insulin.</title>
        <authorList>
            <person name="Colosia A.D."/>
            <person name="Marker A.J."/>
            <person name="Lange A.J."/>
            <person name="El-Maghrabi M.R."/>
            <person name="Granner D.K."/>
            <person name="Tauler A."/>
            <person name="Pilkis J."/>
            <person name="Pilkis S.J."/>
        </authorList>
    </citation>
    <scope>NUCLEOTIDE SEQUENCE [MRNA] (ISOFORM 1)</scope>
    <scope>CATALYTIC ACTIVITY</scope>
    <scope>FUNCTION</scope>
    <source>
        <tissue>Liver</tissue>
    </source>
</reference>
<reference key="5">
    <citation type="journal article" date="1988" name="J. Biol. Chem.">
        <title>Complete amino acid sequence of rat liver 6-phosphofructo-2-kinase/fructose-2,6-bisphosphatase.</title>
        <authorList>
            <person name="Lively M.O."/>
            <person name="El-Maghrabi M.R."/>
            <person name="Pilkis J."/>
            <person name="D'Angelo G."/>
            <person name="Colosia A.D."/>
            <person name="Ciavola J.A."/>
            <person name="Fraser B.A."/>
            <person name="Pilkis S.J."/>
        </authorList>
    </citation>
    <scope>PROTEIN SEQUENCE (ISOFORM 1)</scope>
    <scope>ACETYLATION AT SER-2</scope>
    <source>
        <tissue>Liver</tissue>
    </source>
</reference>
<reference key="6">
    <citation type="journal article" date="1989" name="Biochem. J.">
        <title>Cloning and expression in Escherichia coli of a rat hepatoma cell cDNA coding for 6-phosphofructo-2-kinase/fructose-2,6-bisphosphatase.</title>
        <authorList>
            <person name="Crepin K.M."/>
            <person name="Darville M.I."/>
            <person name="Michel A."/>
            <person name="Hue L."/>
            <person name="Rousseau G.G."/>
        </authorList>
    </citation>
    <scope>NUCLEOTIDE SEQUENCE (ISOFORM 2)</scope>
    <source>
        <strain>Wistar</strain>
        <tissue>Liver</tissue>
    </source>
</reference>
<reference key="7">
    <citation type="journal article" date="1987" name="J. Biol. Chem.">
        <title>Active site sequence of hepatic fructose-2,6-bisphosphatase. Homology in primary structure with phosphoglycerate mutase.</title>
        <authorList>
            <person name="Pilkis S.J."/>
            <person name="Lively M.O."/>
            <person name="El-Maghrabi M.R."/>
        </authorList>
    </citation>
    <scope>PROTEIN SEQUENCE OF 220-267</scope>
    <source>
        <tissue>Liver</tissue>
    </source>
</reference>
<reference key="8">
    <citation type="journal article" date="1989" name="Proc. Natl. Acad. Sci. U.S.A.">
        <title>5' flanking sequence and structure of a gene encoding rat 6-phosphofructo-2-kinase/fructose-2,6-bisphosphatase.</title>
        <authorList>
            <person name="Darville M.I."/>
            <person name="Crepin K.M."/>
            <person name="Hue L."/>
            <person name="Rousseau G.G."/>
        </authorList>
    </citation>
    <scope>NUCLEOTIDE SEQUENCE [GENOMIC DNA] OF 1-32 (ISOFORM 1)</scope>
    <scope>PROTEIN SEQUENCE OF 2-10 (ISOFORM 2)</scope>
</reference>
<reference key="9">
    <citation type="journal article" date="1989" name="J. Biol. Chem.">
        <title>Catalytic site of rat liver and bovine heart fructose-6-phosphate,2-kinase:fructose-2,6-bisphosphatase. Identification of fructose 6-phosphate binding site.</title>
        <authorList>
            <person name="Kitamura K."/>
            <person name="Uyeda K."/>
            <person name="Hartman F.C."/>
            <person name="Kangawa K."/>
            <person name="Matsuo H."/>
        </authorList>
    </citation>
    <scope>PROTEIN SEQUENCE OF 106-114</scope>
    <scope>REGION</scope>
</reference>
<reference key="10">
    <citation type="journal article" date="1989" name="Proc. Natl. Acad. Sci. U.S.A.">
        <title>Evolution of a bifunctional enzyme: 6-phosphofructo-2-kinase/fructose-2,6-bisphosphatase.</title>
        <authorList>
            <person name="Bazan J.F."/>
            <person name="Fletterick R.J."/>
            <person name="Pilkis S.J."/>
        </authorList>
    </citation>
    <scope>DOMAINS</scope>
</reference>
<reference key="11">
    <citation type="journal article" date="1995" name="Protein Sci.">
        <title>Covalent control of 6-phosphofructo-2-kinase/fructose-2,6-bisphosphatase: insights into autoregulation of a bifunctional enzyme.</title>
        <authorList>
            <person name="Kurland I.J."/>
            <person name="Pilkis S.J."/>
        </authorList>
    </citation>
    <scope>PHOSPHORYLATION AT SER-33</scope>
    <scope>ACTIVITY REGULATION</scope>
</reference>
<reference key="12">
    <citation type="journal article" date="2012" name="Nat. Commun.">
        <title>Quantitative maps of protein phosphorylation sites across 14 different rat organs and tissues.</title>
        <authorList>
            <person name="Lundby A."/>
            <person name="Secher A."/>
            <person name="Lage K."/>
            <person name="Nordsborg N.B."/>
            <person name="Dmytriyev A."/>
            <person name="Lundby C."/>
            <person name="Olsen J.V."/>
        </authorList>
    </citation>
    <scope>PHOSPHORYLATION [LARGE SCALE ANALYSIS] AT SER-141</scope>
    <scope>IDENTIFICATION BY MASS SPECTROMETRY [LARGE SCALE ANALYSIS]</scope>
</reference>
<reference key="13">
    <citation type="journal article" date="1996" name="Biochemistry">
        <title>Crystal structure of the rat liver fructose-2,6-bisphosphatase based on selenomethionine multiwavelength anomalous dispersion phases.</title>
        <authorList>
            <person name="Lee Y.-H."/>
            <person name="Ogata C."/>
            <person name="Pflugrath J.W."/>
            <person name="Levitt D.G."/>
            <person name="Sarma R."/>
            <person name="Banaszak L.J."/>
            <person name="Pilkis S.J."/>
        </authorList>
    </citation>
    <scope>X-RAY CRYSTALLOGRAPHY (2.0 ANGSTROMS)</scope>
    <source>
        <tissue>Liver</tissue>
    </source>
</reference>
<reference key="14">
    <citation type="journal article" date="1997" name="Nat. Struct. Biol.">
        <title>Crystal structure of a trapped phosphoenzyme during a catalytic reaction.</title>
        <authorList>
            <person name="Lee Y.-H."/>
            <person name="Olson T.W."/>
            <person name="Ogata C.M."/>
            <person name="Levitt D.G."/>
            <person name="Banaszak L.J."/>
            <person name="Lange A.J."/>
        </authorList>
    </citation>
    <scope>X-RAY CRYSTALLOGRAPHY (2.2 ANGSTROMS) OF 251-441 IN COMPLEX WITH FRUCTOSE 6-PHOSPHATE</scope>
    <scope>ACTIVE SITE</scope>
</reference>
<reference key="15">
    <citation type="submission" date="2000-04" db="PDB data bank">
        <title>Reaction mechanism of fructose-2,6-bisphosphatase suggested by the crystal structures of a pseudo-Michaelis complex and metabolite complexes.</title>
        <authorList>
            <person name="Lee Y.-H."/>
            <person name="Olson T.W."/>
            <person name="McClard R.W."/>
            <person name="Witte J.F."/>
            <person name="McFarlan S.C."/>
            <person name="Banaszak L.J."/>
            <person name="Levitt D.G."/>
            <person name="Lange A.J."/>
        </authorList>
    </citation>
    <scope>X-RAY CRYSTALLOGRAPHY (2.20 ANGSTROMS) OF 252-440 IN COMPLEXES WITH SUBSTRATE ANALOG AND WITH GTP</scope>
</reference>
<name>F261_RAT</name>